<keyword id="KW-0002">3D-structure</keyword>
<keyword id="KW-0067">ATP-binding</keyword>
<keyword id="KW-1003">Cell membrane</keyword>
<keyword id="KW-0217">Developmental protein</keyword>
<keyword id="KW-1015">Disulfide bond</keyword>
<keyword id="KW-0325">Glycoprotein</keyword>
<keyword id="KW-0418">Kinase</keyword>
<keyword id="KW-0460">Magnesium</keyword>
<keyword id="KW-0472">Membrane</keyword>
<keyword id="KW-0479">Metal-binding</keyword>
<keyword id="KW-0547">Nucleotide-binding</keyword>
<keyword id="KW-0597">Phosphoprotein</keyword>
<keyword id="KW-1185">Reference proteome</keyword>
<keyword id="KW-0732">Signal</keyword>
<keyword id="KW-0808">Transferase</keyword>
<keyword id="KW-0812">Transmembrane</keyword>
<keyword id="KW-1133">Transmembrane helix</keyword>
<keyword id="KW-0829">Tyrosine-protein kinase</keyword>
<sequence length="807" mass="91552">MYSEGKLLKVFLIFAGFIIFSLCGEVVSQRYPPAPGLLKYLEQDVCYSLYYYLNWTSLADCKTNFEETGISDVPSTVKVRCQSKNSIRFETEPSEHWQLFILMEHDNFDPIPFTLIEPNNVFGELITTANKEYQIWSTYLDEYGTLQDWMEGPIVLKFDQRNQQPDDIKYNVTQEFKYIILGNDSYTINGKFVWNTTGDRDLCFDIANICQNTNMKHAKIWPTAHPSFDVENLVLNDECEIHVKGIHGTTKHKYKTPSCFELPECFLNNMEPEIPQDVAIAADQDLRGWWNINVAWAKPHFQPEIYNVTVRANMIRSIILPGNATETTFRNIPNTFLSAGKIYNVSVYAIIGQKASHTSRRAFTPGMLRWVWAGATAGAGCAAGGLLAATLLCCGHRRATSRVSQEDPDEKTPKEDDVEIIGIESGSADDHWEVRSDRVLLHEVIGEGAFGVVRRGTLAPGGKSVAVKMLKEFPSQEEVRSFRSEMELMKSVGAHPHVVSLVGCCSGRKPLIVAEYCSRGDLLSYLRSSWDIIVSKHTAKYYNNNMDSMDTSKLKVHKEHTKLVVNKLYELQGPCETELTPLDLLSFCRQIAMGMEFLASNRIVHRDLAARNVLVTEDKTLKIADFGLSRDIYEENQYKQKGNGKMPVKWMALESLTRRVYTTQSDVWSFGVVIWEIVTVGGSPYPEVPAARLVRSLRSGYRMPKPVNCSKPLYDIMRACWNASPRDRPTFPELHQKLDDLLHSACANEYITLEVDVDEAPSTPKPQRYIKMLIRGKLPWSRESYERPVNPTSNLYSSPPVIQTKTA</sequence>
<accession>D2IYS2</accession>
<comment type="function">
    <text evidence="1 7 9">Probable receptor tyrosine kinase. During postembryonic development, involved in the initiation of metamorphosis probably by inducing the production of ecdysone in response to prothoracicotropic hormone (PTTH) (By similarity). Binding to PTTH stimulates activation of canonical MAPK signaling leading to ERK phosphorylation (PubMed:19965758, PubMed:26928300).</text>
</comment>
<comment type="catalytic activity">
    <reaction evidence="5 9">
        <text>L-tyrosyl-[protein] + ATP = O-phospho-L-tyrosyl-[protein] + ADP + H(+)</text>
        <dbReference type="Rhea" id="RHEA:10596"/>
        <dbReference type="Rhea" id="RHEA-COMP:10136"/>
        <dbReference type="Rhea" id="RHEA-COMP:20101"/>
        <dbReference type="ChEBI" id="CHEBI:15378"/>
        <dbReference type="ChEBI" id="CHEBI:30616"/>
        <dbReference type="ChEBI" id="CHEBI:46858"/>
        <dbReference type="ChEBI" id="CHEBI:61978"/>
        <dbReference type="ChEBI" id="CHEBI:456216"/>
        <dbReference type="EC" id="2.7.10.1"/>
    </reaction>
</comment>
<comment type="cofactor">
    <cofactor evidence="11">
        <name>Mg(2+)</name>
        <dbReference type="ChEBI" id="CHEBI:18420"/>
    </cofactor>
</comment>
<comment type="subunit">
    <text evidence="8 9">Homodimer; disulfide-linked.</text>
</comment>
<comment type="subcellular location">
    <subcellularLocation>
        <location evidence="12">Cell membrane</location>
        <topology evidence="11">Single-pass type I membrane protein</topology>
    </subcellularLocation>
</comment>
<comment type="developmental stage">
    <text evidence="7">Expressed in the prothoracic gland in 4th and 5th instar stage larvae, and P0 stage pupae. Also detected at lower level in testes and ovaries of 5th instar larvae.</text>
</comment>
<comment type="domain">
    <text evidence="8">Contains 3 very unusual FN3 domains in the extracellular domain. The second FN3 domain is involved in the binding to PTTH dimer.</text>
</comment>
<comment type="PTM">
    <text evidence="9">May be auto-phosphorylated on tyrosine residues.</text>
</comment>
<comment type="PTM">
    <text evidence="8">At least one of the 3 cysteine residues Cys-381, Cys-393 or Cys-394 is involved in the formation of interchain disulfide bonds. The disulfide bond sites in the extracellular region are not involved in homodimer formation.</text>
</comment>
<comment type="similarity">
    <text evidence="6 11">Belongs to the protein kinase superfamily. Tyr protein kinase family.</text>
</comment>
<evidence type="ECO:0000250" key="1">
    <source>
        <dbReference type="UniProtKB" id="P18475"/>
    </source>
</evidence>
<evidence type="ECO:0000255" key="2"/>
<evidence type="ECO:0000255" key="3">
    <source>
        <dbReference type="PROSITE-ProRule" id="PRU00159"/>
    </source>
</evidence>
<evidence type="ECO:0000255" key="4">
    <source>
        <dbReference type="PROSITE-ProRule" id="PRU00498"/>
    </source>
</evidence>
<evidence type="ECO:0000255" key="5">
    <source>
        <dbReference type="PROSITE-ProRule" id="PRU10028"/>
    </source>
</evidence>
<evidence type="ECO:0000255" key="6">
    <source>
        <dbReference type="RuleBase" id="RU000307"/>
    </source>
</evidence>
<evidence type="ECO:0000269" key="7">
    <source>
    </source>
</evidence>
<evidence type="ECO:0000269" key="8">
    <source>
    </source>
</evidence>
<evidence type="ECO:0000269" key="9">
    <source>
    </source>
</evidence>
<evidence type="ECO:0000303" key="10">
    <source>
    </source>
</evidence>
<evidence type="ECO:0000305" key="11"/>
<evidence type="ECO:0000305" key="12">
    <source>
    </source>
</evidence>
<evidence type="ECO:0000312" key="13">
    <source>
        <dbReference type="EMBL" id="ACZ81657.1"/>
    </source>
</evidence>
<evidence type="ECO:0007744" key="14">
    <source>
        <dbReference type="PDB" id="5AOQ"/>
    </source>
</evidence>
<evidence type="ECO:0007829" key="15">
    <source>
        <dbReference type="PDB" id="5AOQ"/>
    </source>
</evidence>
<organism evidence="13">
    <name type="scientific">Bombyx mori</name>
    <name type="common">Silk moth</name>
    <dbReference type="NCBI Taxonomy" id="7091"/>
    <lineage>
        <taxon>Eukaryota</taxon>
        <taxon>Metazoa</taxon>
        <taxon>Ecdysozoa</taxon>
        <taxon>Arthropoda</taxon>
        <taxon>Hexapoda</taxon>
        <taxon>Insecta</taxon>
        <taxon>Pterygota</taxon>
        <taxon>Neoptera</taxon>
        <taxon>Endopterygota</taxon>
        <taxon>Lepidoptera</taxon>
        <taxon>Glossata</taxon>
        <taxon>Ditrysia</taxon>
        <taxon>Bombycoidea</taxon>
        <taxon>Bombycidae</taxon>
        <taxon>Bombycinae</taxon>
        <taxon>Bombyx</taxon>
    </lineage>
</organism>
<proteinExistence type="evidence at protein level"/>
<dbReference type="EC" id="2.7.10.1" evidence="5 9"/>
<dbReference type="EMBL" id="GQ477743">
    <property type="protein sequence ID" value="ACZ81657.1"/>
    <property type="molecule type" value="mRNA"/>
</dbReference>
<dbReference type="RefSeq" id="NP_001164049.1">
    <property type="nucleotide sequence ID" value="NM_001170578.1"/>
</dbReference>
<dbReference type="PDB" id="5AOQ">
    <property type="method" value="X-ray"/>
    <property type="resolution" value="2.70 A"/>
    <property type="chains" value="A/B=24-287"/>
</dbReference>
<dbReference type="PDBsum" id="5AOQ"/>
<dbReference type="SMR" id="D2IYS2"/>
<dbReference type="FunCoup" id="D2IYS2">
    <property type="interactions" value="52"/>
</dbReference>
<dbReference type="STRING" id="7091.D2IYS2"/>
<dbReference type="GlyCosmos" id="D2IYS2">
    <property type="glycosylation" value="7 sites, No reported glycans"/>
</dbReference>
<dbReference type="iPTMnet" id="D2IYS2"/>
<dbReference type="PaxDb" id="7091-BGIBMGA003976-TA"/>
<dbReference type="KEGG" id="bmor:100322874"/>
<dbReference type="CTD" id="100322874"/>
<dbReference type="eggNOG" id="KOG0200">
    <property type="taxonomic scope" value="Eukaryota"/>
</dbReference>
<dbReference type="InParanoid" id="D2IYS2"/>
<dbReference type="EvolutionaryTrace" id="D2IYS2"/>
<dbReference type="Proteomes" id="UP000005204">
    <property type="component" value="Unassembled WGS sequence"/>
</dbReference>
<dbReference type="GO" id="GO:0005886">
    <property type="term" value="C:plasma membrane"/>
    <property type="evidence" value="ECO:0007669"/>
    <property type="project" value="UniProtKB-SubCell"/>
</dbReference>
<dbReference type="GO" id="GO:0043235">
    <property type="term" value="C:receptor complex"/>
    <property type="evidence" value="ECO:0007669"/>
    <property type="project" value="TreeGrafter"/>
</dbReference>
<dbReference type="GO" id="GO:0005524">
    <property type="term" value="F:ATP binding"/>
    <property type="evidence" value="ECO:0007669"/>
    <property type="project" value="UniProtKB-KW"/>
</dbReference>
<dbReference type="GO" id="GO:0046872">
    <property type="term" value="F:metal ion binding"/>
    <property type="evidence" value="ECO:0007669"/>
    <property type="project" value="UniProtKB-KW"/>
</dbReference>
<dbReference type="GO" id="GO:0004714">
    <property type="term" value="F:transmembrane receptor protein tyrosine kinase activity"/>
    <property type="evidence" value="ECO:0007669"/>
    <property type="project" value="UniProtKB-EC"/>
</dbReference>
<dbReference type="GO" id="GO:0007169">
    <property type="term" value="P:cell surface receptor protein tyrosine kinase signaling pathway"/>
    <property type="evidence" value="ECO:0007669"/>
    <property type="project" value="TreeGrafter"/>
</dbReference>
<dbReference type="CDD" id="cd00192">
    <property type="entry name" value="PTKc"/>
    <property type="match status" value="1"/>
</dbReference>
<dbReference type="FunFam" id="1.10.510.10:FF:000190">
    <property type="entry name" value="Proto-oncogene tyrosine-protein kinase receptor Ret"/>
    <property type="match status" value="1"/>
</dbReference>
<dbReference type="Gene3D" id="3.30.200.20">
    <property type="entry name" value="Phosphorylase Kinase, domain 1"/>
    <property type="match status" value="1"/>
</dbReference>
<dbReference type="Gene3D" id="1.10.510.10">
    <property type="entry name" value="Transferase(Phosphotransferase) domain 1"/>
    <property type="match status" value="1"/>
</dbReference>
<dbReference type="InterPro" id="IPR011009">
    <property type="entry name" value="Kinase-like_dom_sf"/>
</dbReference>
<dbReference type="InterPro" id="IPR000719">
    <property type="entry name" value="Prot_kinase_dom"/>
</dbReference>
<dbReference type="InterPro" id="IPR017441">
    <property type="entry name" value="Protein_kinase_ATP_BS"/>
</dbReference>
<dbReference type="InterPro" id="IPR050122">
    <property type="entry name" value="RTK"/>
</dbReference>
<dbReference type="InterPro" id="IPR001245">
    <property type="entry name" value="Ser-Thr/Tyr_kinase_cat_dom"/>
</dbReference>
<dbReference type="InterPro" id="IPR054167">
    <property type="entry name" value="Tor_FN3_1st"/>
</dbReference>
<dbReference type="InterPro" id="IPR049336">
    <property type="entry name" value="Tor_FN3_2nd"/>
</dbReference>
<dbReference type="InterPro" id="IPR054166">
    <property type="entry name" value="Tor_FN3_3nd"/>
</dbReference>
<dbReference type="InterPro" id="IPR008266">
    <property type="entry name" value="Tyr_kinase_AS"/>
</dbReference>
<dbReference type="InterPro" id="IPR020635">
    <property type="entry name" value="Tyr_kinase_cat_dom"/>
</dbReference>
<dbReference type="PANTHER" id="PTHR24416">
    <property type="entry name" value="TYROSINE-PROTEIN KINASE RECEPTOR"/>
    <property type="match status" value="1"/>
</dbReference>
<dbReference type="PANTHER" id="PTHR24416:SF620">
    <property type="entry name" value="TYROSINE-PROTEIN KINASE RECEPTOR TORSO"/>
    <property type="match status" value="1"/>
</dbReference>
<dbReference type="Pfam" id="PF23008">
    <property type="entry name" value="FN3_Tor_3rd"/>
    <property type="match status" value="1"/>
</dbReference>
<dbReference type="Pfam" id="PF07714">
    <property type="entry name" value="PK_Tyr_Ser-Thr"/>
    <property type="match status" value="1"/>
</dbReference>
<dbReference type="Pfam" id="PF23006">
    <property type="entry name" value="Tor_FN3_1st"/>
    <property type="match status" value="1"/>
</dbReference>
<dbReference type="Pfam" id="PF21468">
    <property type="entry name" value="Tor_FN3_2nd"/>
    <property type="match status" value="1"/>
</dbReference>
<dbReference type="PIRSF" id="PIRSF000615">
    <property type="entry name" value="TyrPK_CSF1-R"/>
    <property type="match status" value="1"/>
</dbReference>
<dbReference type="SMART" id="SM00219">
    <property type="entry name" value="TyrKc"/>
    <property type="match status" value="1"/>
</dbReference>
<dbReference type="SUPFAM" id="SSF56112">
    <property type="entry name" value="Protein kinase-like (PK-like)"/>
    <property type="match status" value="1"/>
</dbReference>
<dbReference type="PROSITE" id="PS00107">
    <property type="entry name" value="PROTEIN_KINASE_ATP"/>
    <property type="match status" value="1"/>
</dbReference>
<dbReference type="PROSITE" id="PS50011">
    <property type="entry name" value="PROTEIN_KINASE_DOM"/>
    <property type="match status" value="1"/>
</dbReference>
<dbReference type="PROSITE" id="PS00109">
    <property type="entry name" value="PROTEIN_KINASE_TYR"/>
    <property type="match status" value="1"/>
</dbReference>
<reference evidence="13" key="1">
    <citation type="journal article" date="2009" name="Science">
        <title>The insect neuropeptide PTTH activates receptor tyrosine kinase torso to initiate metamorphosis.</title>
        <authorList>
            <person name="Rewitz K.F."/>
            <person name="Yamanaka N."/>
            <person name="Gilbert L.I."/>
            <person name="O'Connor M.B."/>
        </authorList>
    </citation>
    <scope>NUCLEOTIDE SEQUENCE [MRNA]</scope>
    <scope>FUNCTION</scope>
    <scope>DEVELOPMENTAL STAGE</scope>
</reference>
<reference evidence="11" key="2">
    <citation type="journal article" date="2016" name="Sci. Rep.">
        <title>Ligand-dependent responses of the silkworm prothoracicotropic hormone receptor, Torso, are maintained by unusual intermolecular disulfide bridges in the transmembrane region.</title>
        <authorList>
            <person name="Konogami T."/>
            <person name="Yang Y."/>
            <person name="Ogihara M.H."/>
            <person name="Hikiba J."/>
            <person name="Kataoka H."/>
            <person name="Saito K."/>
        </authorList>
    </citation>
    <scope>FUNCTION</scope>
    <scope>CATALYTIC ACTIVITY</scope>
    <scope>SUBUNIT</scope>
    <scope>PHOSPHORYLATION</scope>
    <scope>DISULFIDE BONDS</scope>
    <scope>MUTAGENESIS OF CYS-381; CYS-393 AND CYS-394</scope>
</reference>
<reference evidence="14" key="3">
    <citation type="journal article" date="2015" name="Mol. Cell">
        <title>Structural basis of neurohormone perception by the receptor tyrosine kinase Torso.</title>
        <authorList>
            <person name="Jenni S."/>
            <person name="Goyal Y."/>
            <person name="von Grotthuss M."/>
            <person name="Shvartsman S.Y."/>
            <person name="Klein D.E."/>
        </authorList>
    </citation>
    <scope>X-RAY CRYSTALLOGRAPHY (2.70 ANGSTROMS) OF 24-287 IN COMPLEX WITH PTTH</scope>
    <scope>SUBUNIT</scope>
    <scope>DOMAIN</scope>
    <scope>GLYCOSYLATION AT ASN-195</scope>
    <scope>DISULFIDE BONDS</scope>
</reference>
<gene>
    <name evidence="10" type="primary">tor</name>
</gene>
<protein>
    <recommendedName>
        <fullName evidence="11">Tyrosine-protein kinase receptor torso</fullName>
        <ecNumber evidence="5 9">2.7.10.1</ecNumber>
    </recommendedName>
</protein>
<feature type="signal peptide" evidence="2">
    <location>
        <begin position="1"/>
        <end position="28"/>
    </location>
</feature>
<feature type="chain" id="PRO_5003032856" description="Tyrosine-protein kinase receptor torso" evidence="2">
    <location>
        <begin position="29"/>
        <end position="807"/>
    </location>
</feature>
<feature type="topological domain" description="Extracellular" evidence="11">
    <location>
        <begin position="29"/>
        <end position="370"/>
    </location>
</feature>
<feature type="transmembrane region" description="Helical" evidence="2">
    <location>
        <begin position="371"/>
        <end position="391"/>
    </location>
</feature>
<feature type="topological domain" description="Cytoplasmic" evidence="11">
    <location>
        <begin position="392"/>
        <end position="807"/>
    </location>
</feature>
<feature type="domain" description="Protein kinase" evidence="3">
    <location>
        <begin position="439"/>
        <end position="738"/>
    </location>
</feature>
<feature type="active site" description="Proton acceptor" evidence="3">
    <location>
        <position position="607"/>
    </location>
</feature>
<feature type="binding site" evidence="3">
    <location>
        <begin position="445"/>
        <end position="453"/>
    </location>
    <ligand>
        <name>ATP</name>
        <dbReference type="ChEBI" id="CHEBI:30616"/>
    </ligand>
</feature>
<feature type="binding site" evidence="3">
    <location>
        <position position="468"/>
    </location>
    <ligand>
        <name>ATP</name>
        <dbReference type="ChEBI" id="CHEBI:30616"/>
    </ligand>
</feature>
<feature type="site" description="Implicated in PTTH ligand binding" evidence="8">
    <location>
        <position position="205"/>
    </location>
</feature>
<feature type="site" description="Implicated in PTTH ligand binding" evidence="8">
    <location>
        <position position="219"/>
    </location>
</feature>
<feature type="glycosylation site" description="N-linked (GlcNAc...) asparagine" evidence="4">
    <location>
        <position position="54"/>
    </location>
</feature>
<feature type="glycosylation site" description="N-linked (GlcNAc...) asparagine" evidence="4">
    <location>
        <position position="171"/>
    </location>
</feature>
<feature type="glycosylation site" description="N-linked (GlcNAc...) asparagine" evidence="4">
    <location>
        <position position="183"/>
    </location>
</feature>
<feature type="glycosylation site" description="N-linked (GlcNAc...) asparagine" evidence="4 8">
    <location>
        <position position="195"/>
    </location>
</feature>
<feature type="glycosylation site" description="N-linked (GlcNAc...) asparagine" evidence="4">
    <location>
        <position position="307"/>
    </location>
</feature>
<feature type="glycosylation site" description="N-linked (GlcNAc...) asparagine" evidence="4">
    <location>
        <position position="323"/>
    </location>
</feature>
<feature type="glycosylation site" description="N-linked (GlcNAc...) asparagine" evidence="4">
    <location>
        <position position="344"/>
    </location>
</feature>
<feature type="disulfide bond" evidence="8 14">
    <location>
        <begin position="46"/>
        <end position="61"/>
    </location>
</feature>
<feature type="disulfide bond" evidence="8 14">
    <location>
        <begin position="81"/>
        <end position="203"/>
    </location>
</feature>
<feature type="disulfide bond" evidence="8 14">
    <location>
        <begin position="210"/>
        <end position="239"/>
    </location>
</feature>
<feature type="disulfide bond" evidence="8 14">
    <location>
        <begin position="259"/>
        <end position="265"/>
    </location>
</feature>
<feature type="mutagenesis site" description="Forms non-covalently attached homodimers which become phosphorylated independently of ligand-binding but fail to induce ERK phosphorylation in response to PTTH binding; when associated with P-393 and P-394." evidence="9">
    <original>C</original>
    <variation>P</variation>
    <location>
        <position position="381"/>
    </location>
</feature>
<feature type="mutagenesis site" description="Forms non-covalently attached homodimers which become phosphorylated independently of ligand-binding but fail to induce ERK phosphorylation in response to PTTH binding; when associated with P-381 and P-394." evidence="9">
    <original>C</original>
    <variation>P</variation>
    <location>
        <position position="393"/>
    </location>
</feature>
<feature type="mutagenesis site" description="Forms non-covalently attached homodimers which become phosphorylated independently of ligand-binding but fail to induce ERK phosphorylation in response to PTTH binding; when associated with P-381 and P-393." evidence="9">
    <original>C</original>
    <variation>P</variation>
    <location>
        <position position="394"/>
    </location>
</feature>
<feature type="helix" evidence="15">
    <location>
        <begin position="35"/>
        <end position="38"/>
    </location>
</feature>
<feature type="helix" evidence="15">
    <location>
        <begin position="39"/>
        <end position="41"/>
    </location>
</feature>
<feature type="helix" evidence="15">
    <location>
        <begin position="42"/>
        <end position="53"/>
    </location>
</feature>
<feature type="strand" evidence="15">
    <location>
        <begin position="65"/>
        <end position="67"/>
    </location>
</feature>
<feature type="strand" evidence="15">
    <location>
        <begin position="70"/>
        <end position="74"/>
    </location>
</feature>
<feature type="strand" evidence="15">
    <location>
        <begin position="78"/>
        <end position="83"/>
    </location>
</feature>
<feature type="strand" evidence="15">
    <location>
        <begin position="86"/>
        <end position="90"/>
    </location>
</feature>
<feature type="strand" evidence="15">
    <location>
        <begin position="98"/>
        <end position="103"/>
    </location>
</feature>
<feature type="strand" evidence="15">
    <location>
        <begin position="113"/>
        <end position="116"/>
    </location>
</feature>
<feature type="strand" evidence="15">
    <location>
        <begin position="122"/>
        <end position="126"/>
    </location>
</feature>
<feature type="strand" evidence="15">
    <location>
        <begin position="133"/>
        <end position="140"/>
    </location>
</feature>
<feature type="strand" evidence="15">
    <location>
        <begin position="149"/>
        <end position="155"/>
    </location>
</feature>
<feature type="strand" evidence="15">
    <location>
        <begin position="174"/>
        <end position="194"/>
    </location>
</feature>
<feature type="strand" evidence="15">
    <location>
        <begin position="204"/>
        <end position="210"/>
    </location>
</feature>
<feature type="strand" evidence="15">
    <location>
        <begin position="213"/>
        <end position="220"/>
    </location>
</feature>
<feature type="strand" evidence="15">
    <location>
        <begin position="227"/>
        <end position="233"/>
    </location>
</feature>
<feature type="strand" evidence="15">
    <location>
        <begin position="238"/>
        <end position="245"/>
    </location>
</feature>
<feature type="strand" evidence="15">
    <location>
        <begin position="248"/>
        <end position="255"/>
    </location>
</feature>
<feature type="turn" evidence="15">
    <location>
        <begin position="259"/>
        <end position="261"/>
    </location>
</feature>
<feature type="helix" evidence="15">
    <location>
        <begin position="263"/>
        <end position="267"/>
    </location>
</feature>
<name>TORSO_BOMMO</name>